<keyword id="KW-0414">Isoprene biosynthesis</keyword>
<keyword id="KW-0444">Lipid biosynthesis</keyword>
<keyword id="KW-0443">Lipid metabolism</keyword>
<keyword id="KW-0460">Magnesium</keyword>
<keyword id="KW-0472">Membrane</keyword>
<keyword id="KW-0511">Multifunctional enzyme</keyword>
<keyword id="KW-0521">NADP</keyword>
<keyword id="KW-0752">Steroid biosynthesis</keyword>
<keyword id="KW-0753">Steroid metabolism</keyword>
<keyword id="KW-0756">Sterol biosynthesis</keyword>
<keyword id="KW-1207">Sterol metabolism</keyword>
<keyword id="KW-0808">Transferase</keyword>
<keyword id="KW-0812">Transmembrane</keyword>
<keyword id="KW-1133">Transmembrane helix</keyword>
<organism>
    <name type="scientific">Phoma sp. (strain ATCC 20986 / MF5453)</name>
    <dbReference type="NCBI Taxonomy" id="1828523"/>
    <lineage>
        <taxon>Eukaryota</taxon>
        <taxon>Fungi</taxon>
        <taxon>Dikarya</taxon>
        <taxon>Ascomycota</taxon>
        <taxon>Pezizomycotina</taxon>
        <taxon>Dothideomycetes</taxon>
        <taxon>Pleosporomycetidae</taxon>
        <taxon>Pleosporales</taxon>
        <taxon>Pleosporineae</taxon>
        <taxon>Didymellaceae</taxon>
        <taxon>Phoma</taxon>
    </lineage>
</organism>
<sequence length="419" mass="48180">MVSARGILYYLSHPQELRPMIQWKVFHGLAHQRDEKNESPDVQACYYYLALTSRSFVAVCQQLDPELLMPICIFYLVLRGLDTIEDDMTLSTEVKEPLLRNFHTTIYDQSWTFHDSGPDEKDRELLVHFDCVAREFAKVKDEYKVIITDITKKMGNGMADFVVNGELTGVRKIEDYELYCHYVAGVVGEGLTRLFVEAKVAEPSLLENPKLIESMGQFLQQTNIIRDVREDHDEVRHFWPKEVWAKYADDFDQLVSPIPQNRQKALQCSSEMVLMALNRADDCLNYISGVREQSVFNFVAIPQSMAIATLELCFQNPAIFDKNIKITKGTACQLMMDSTQDMQHVCQAFRRHARRIQKKNNPKDPHFHDINAACNKIERFIDGRYPNLQDEQAKADTMYLVVLLLGILGVAAAVLMAKR</sequence>
<reference key="1">
    <citation type="journal article" date="2016" name="Chem. Commun. (Camb.)">
        <title>Identification of genes encoding squalestatin S1 biosynthesis and in vitro production of new squalestatin analogues.</title>
        <authorList>
            <person name="Bonsch B."/>
            <person name="Belt V."/>
            <person name="Bartel C."/>
            <person name="Duensing N."/>
            <person name="Koziol M."/>
            <person name="Lazarus C.M."/>
            <person name="Bailey A.M."/>
            <person name="Simpson T.J."/>
            <person name="Cox R.J."/>
        </authorList>
    </citation>
    <scope>NUCLEOTIDE SEQUENCE [GENOMIC DNA]</scope>
    <scope>FUNCTION</scope>
    <scope>INDUCTION</scope>
</reference>
<gene>
    <name evidence="4" type="primary">R6</name>
</gene>
<proteinExistence type="evidence at transcript level"/>
<dbReference type="EC" id="2.5.1.21" evidence="6"/>
<dbReference type="EMBL" id="KU946987">
    <property type="protein sequence ID" value="AMY15074.1"/>
    <property type="molecule type" value="Genomic_DNA"/>
</dbReference>
<dbReference type="SMR" id="A0A3G1DJL2"/>
<dbReference type="UniPathway" id="UPA00767">
    <property type="reaction ID" value="UER00751"/>
</dbReference>
<dbReference type="GO" id="GO:0005789">
    <property type="term" value="C:endoplasmic reticulum membrane"/>
    <property type="evidence" value="ECO:0007669"/>
    <property type="project" value="TreeGrafter"/>
</dbReference>
<dbReference type="GO" id="GO:0051996">
    <property type="term" value="F:squalene synthase [NAD(P)H] activity"/>
    <property type="evidence" value="ECO:0007669"/>
    <property type="project" value="UniProtKB-EC"/>
</dbReference>
<dbReference type="GO" id="GO:0006696">
    <property type="term" value="P:ergosterol biosynthetic process"/>
    <property type="evidence" value="ECO:0007669"/>
    <property type="project" value="TreeGrafter"/>
</dbReference>
<dbReference type="GO" id="GO:0045338">
    <property type="term" value="P:farnesyl diphosphate metabolic process"/>
    <property type="evidence" value="ECO:0007669"/>
    <property type="project" value="InterPro"/>
</dbReference>
<dbReference type="GO" id="GO:0008299">
    <property type="term" value="P:isoprenoid biosynthetic process"/>
    <property type="evidence" value="ECO:0007669"/>
    <property type="project" value="UniProtKB-KW"/>
</dbReference>
<dbReference type="CDD" id="cd00683">
    <property type="entry name" value="Trans_IPPS_HH"/>
    <property type="match status" value="1"/>
</dbReference>
<dbReference type="FunFam" id="1.10.600.10:FF:000003">
    <property type="entry name" value="Farnesyl-diphosphate farnesyltransferase 1"/>
    <property type="match status" value="1"/>
</dbReference>
<dbReference type="Gene3D" id="1.10.600.10">
    <property type="entry name" value="Farnesyl Diphosphate Synthase"/>
    <property type="match status" value="1"/>
</dbReference>
<dbReference type="InterPro" id="IPR008949">
    <property type="entry name" value="Isoprenoid_synthase_dom_sf"/>
</dbReference>
<dbReference type="InterPro" id="IPR002060">
    <property type="entry name" value="Squ/phyt_synthse"/>
</dbReference>
<dbReference type="InterPro" id="IPR006449">
    <property type="entry name" value="Squal_synth-like"/>
</dbReference>
<dbReference type="InterPro" id="IPR019845">
    <property type="entry name" value="Squalene/phytoene_synthase_CS"/>
</dbReference>
<dbReference type="InterPro" id="IPR044844">
    <property type="entry name" value="Trans_IPPS_euk-type"/>
</dbReference>
<dbReference type="InterPro" id="IPR033904">
    <property type="entry name" value="Trans_IPPS_HH"/>
</dbReference>
<dbReference type="NCBIfam" id="TIGR01559">
    <property type="entry name" value="squal_synth"/>
    <property type="match status" value="1"/>
</dbReference>
<dbReference type="PANTHER" id="PTHR11626">
    <property type="entry name" value="FARNESYL-DIPHOSPHATE FARNESYLTRANSFERASE"/>
    <property type="match status" value="1"/>
</dbReference>
<dbReference type="PANTHER" id="PTHR11626:SF2">
    <property type="entry name" value="SQUALENE SYNTHASE"/>
    <property type="match status" value="1"/>
</dbReference>
<dbReference type="Pfam" id="PF00494">
    <property type="entry name" value="SQS_PSY"/>
    <property type="match status" value="1"/>
</dbReference>
<dbReference type="SFLD" id="SFLDS00005">
    <property type="entry name" value="Isoprenoid_Synthase_Type_I"/>
    <property type="match status" value="1"/>
</dbReference>
<dbReference type="SFLD" id="SFLDG01018">
    <property type="entry name" value="Squalene/Phytoene_Synthase_Lik"/>
    <property type="match status" value="1"/>
</dbReference>
<dbReference type="SUPFAM" id="SSF48576">
    <property type="entry name" value="Terpenoid synthases"/>
    <property type="match status" value="1"/>
</dbReference>
<dbReference type="PROSITE" id="PS01044">
    <property type="entry name" value="SQUALEN_PHYTOEN_SYN_1"/>
    <property type="match status" value="1"/>
</dbReference>
<dbReference type="PROSITE" id="PS01045">
    <property type="entry name" value="SQUALEN_PHYTOEN_SYN_2"/>
    <property type="match status" value="1"/>
</dbReference>
<feature type="chain" id="PRO_0000447843" description="Squalene synthase R6">
    <location>
        <begin position="1"/>
        <end position="419"/>
    </location>
</feature>
<feature type="transmembrane region" description="Helical" evidence="2">
    <location>
        <begin position="397"/>
        <end position="417"/>
    </location>
</feature>
<protein>
    <recommendedName>
        <fullName evidence="4">Squalene synthase R6</fullName>
        <shortName evidence="5">SQS</shortName>
        <shortName evidence="4">SS</shortName>
        <ecNumber evidence="6">2.5.1.21</ecNumber>
    </recommendedName>
    <alternativeName>
        <fullName evidence="4">Squalestatin S1 biosynthesis cluster protein R6</fullName>
    </alternativeName>
</protein>
<name>MFR6_PHOSM</name>
<accession>A0A3G1DJL2</accession>
<evidence type="ECO:0000250" key="1">
    <source>
        <dbReference type="UniProtKB" id="P29704"/>
    </source>
</evidence>
<evidence type="ECO:0000255" key="2"/>
<evidence type="ECO:0000269" key="3">
    <source>
    </source>
</evidence>
<evidence type="ECO:0000303" key="4">
    <source>
    </source>
</evidence>
<evidence type="ECO:0000305" key="5"/>
<evidence type="ECO:0000305" key="6">
    <source>
    </source>
</evidence>
<comment type="function">
    <text evidence="1 3 6">Squalene synthase; part of the gene cluster that mediates the biosynthesis of squalestatin S1 (SQS1, also known as zaragozic acid A), a heavily oxidized fungal polyketide that offers potent cholesterol lowering activity by targeting squalene synthase (SS) (PubMed:27056201). Catalyzes the condensation of 2 two farnesyl pyrophosphate moieties to form squalene (By similarity). The presence of a gene encoding a squalene synthase supports the identification of the cluster as being responsible for SQS1 production and suggests a likely mechanism for self-resistance (Probable).</text>
</comment>
<comment type="catalytic activity">
    <reaction evidence="1">
        <text>2 (2E,6E)-farnesyl diphosphate + NADPH + H(+) = squalene + 2 diphosphate + NADP(+)</text>
        <dbReference type="Rhea" id="RHEA:32295"/>
        <dbReference type="ChEBI" id="CHEBI:15378"/>
        <dbReference type="ChEBI" id="CHEBI:15440"/>
        <dbReference type="ChEBI" id="CHEBI:33019"/>
        <dbReference type="ChEBI" id="CHEBI:57783"/>
        <dbReference type="ChEBI" id="CHEBI:58349"/>
        <dbReference type="ChEBI" id="CHEBI:175763"/>
        <dbReference type="EC" id="2.5.1.21"/>
    </reaction>
</comment>
<comment type="catalytic activity">
    <reaction evidence="1">
        <text>2 (2E,6E)-farnesyl diphosphate + NADH + H(+) = squalene + 2 diphosphate + NAD(+)</text>
        <dbReference type="Rhea" id="RHEA:32299"/>
        <dbReference type="ChEBI" id="CHEBI:15378"/>
        <dbReference type="ChEBI" id="CHEBI:15440"/>
        <dbReference type="ChEBI" id="CHEBI:33019"/>
        <dbReference type="ChEBI" id="CHEBI:57540"/>
        <dbReference type="ChEBI" id="CHEBI:57945"/>
        <dbReference type="ChEBI" id="CHEBI:175763"/>
        <dbReference type="EC" id="2.5.1.21"/>
    </reaction>
</comment>
<comment type="cofactor">
    <cofactor evidence="1">
        <name>Mg(2+)</name>
        <dbReference type="ChEBI" id="CHEBI:18420"/>
    </cofactor>
</comment>
<comment type="pathway">
    <text evidence="1">Terpene metabolism; lanosterol biosynthesis; lanosterol from farnesyl diphosphate: step 1/3.</text>
</comment>
<comment type="subcellular location">
    <subcellularLocation>
        <location evidence="2">Membrane</location>
        <topology evidence="2">Single-pass membrane protein</topology>
    </subcellularLocation>
</comment>
<comment type="induction">
    <text evidence="3">Expression is induced on squalestatin S1-producing YMG medium.</text>
</comment>
<comment type="similarity">
    <text evidence="5">Belongs to the phytoene/squalene synthase family.</text>
</comment>